<sequence length="718" mass="77953">MTSNDPVRRAETLREQIRYHNYRYYVLDEPVISDAEYDALMRELRELEAAHPELVTPDSPTQRVGAPPSEQFAKVQHVVPMLSLANAFDEAGMRAWYDRTLRLLGSDAQVAFVVEPKIDGLAVTLIYRNGVLVRGATRGDGEIGEDVTANLRTISSIPLRLGSFANDDSAPTNPTAVPPLLEVRGEVYMRIADFMRLNEQLAVAGEKVAANPRNAAAGSLRQKDPAVTSRRPLRFFAYGVGQVEGVALQTQWETLHFLRALGFPVNRDARRFERFEEALAYCREWMTRRDELEYEVDGVVVKIDSFAQQAELGVVGRDPRWAIAFKFPAREAVSRLLDIVVNVGRTGVITPNAVIEPVNIGGVTVRNASLHNADYIAERDIRIGDYVIVKRAGDVIPHIVGPVVARRDGSERVWQMPATCPACGTPLERAEGEVAYRCPNFGICPAQITRRIEHFVSRSAMDIAGIGEKQVQLFVERGWVQDVADLYTLTPEHFHGIEGYGPKRIANLLNAIAESKDRPLHRLIVGLGIRYVGEVVAQILADHFGSLDALAAASADEIDDLEGIGPAIAASVAEYFARPESKALIAKLKRVGVRTEAKGPAVAPKGDALAGKTFVITGTLPSMSREEAGALIVAHGGRVSGSVSKKTDYLVVGSEPGGTKVAKAQELGIPTLDEAGLLALIGANDRSAPAASNNNQNAASATSRGTMAEVQQLGLNLE</sequence>
<organism>
    <name type="scientific">Roseiflexus castenholzii (strain DSM 13941 / HLO8)</name>
    <dbReference type="NCBI Taxonomy" id="383372"/>
    <lineage>
        <taxon>Bacteria</taxon>
        <taxon>Bacillati</taxon>
        <taxon>Chloroflexota</taxon>
        <taxon>Chloroflexia</taxon>
        <taxon>Chloroflexales</taxon>
        <taxon>Roseiflexineae</taxon>
        <taxon>Roseiflexaceae</taxon>
        <taxon>Roseiflexus</taxon>
    </lineage>
</organism>
<keyword id="KW-0227">DNA damage</keyword>
<keyword id="KW-0234">DNA repair</keyword>
<keyword id="KW-0235">DNA replication</keyword>
<keyword id="KW-0436">Ligase</keyword>
<keyword id="KW-0460">Magnesium</keyword>
<keyword id="KW-0464">Manganese</keyword>
<keyword id="KW-0479">Metal-binding</keyword>
<keyword id="KW-0520">NAD</keyword>
<keyword id="KW-1185">Reference proteome</keyword>
<keyword id="KW-0862">Zinc</keyword>
<name>DNLJ_ROSCS</name>
<proteinExistence type="inferred from homology"/>
<reference key="1">
    <citation type="submission" date="2007-08" db="EMBL/GenBank/DDBJ databases">
        <title>Complete sequence of Roseiflexus castenholzii DSM 13941.</title>
        <authorList>
            <consortium name="US DOE Joint Genome Institute"/>
            <person name="Copeland A."/>
            <person name="Lucas S."/>
            <person name="Lapidus A."/>
            <person name="Barry K."/>
            <person name="Glavina del Rio T."/>
            <person name="Dalin E."/>
            <person name="Tice H."/>
            <person name="Pitluck S."/>
            <person name="Thompson L.S."/>
            <person name="Brettin T."/>
            <person name="Bruce D."/>
            <person name="Detter J.C."/>
            <person name="Han C."/>
            <person name="Tapia R."/>
            <person name="Schmutz J."/>
            <person name="Larimer F."/>
            <person name="Land M."/>
            <person name="Hauser L."/>
            <person name="Kyrpides N."/>
            <person name="Mikhailova N."/>
            <person name="Bryant D.A."/>
            <person name="Hanada S."/>
            <person name="Tsukatani Y."/>
            <person name="Richardson P."/>
        </authorList>
    </citation>
    <scope>NUCLEOTIDE SEQUENCE [LARGE SCALE GENOMIC DNA]</scope>
    <source>
        <strain>DSM 13941 / HLO8</strain>
    </source>
</reference>
<gene>
    <name evidence="1" type="primary">ligA</name>
    <name type="ordered locus">Rcas_0877</name>
</gene>
<evidence type="ECO:0000255" key="1">
    <source>
        <dbReference type="HAMAP-Rule" id="MF_01588"/>
    </source>
</evidence>
<protein>
    <recommendedName>
        <fullName evidence="1">DNA ligase</fullName>
        <ecNumber evidence="1">6.5.1.2</ecNumber>
    </recommendedName>
    <alternativeName>
        <fullName evidence="1">Polydeoxyribonucleotide synthase [NAD(+)]</fullName>
    </alternativeName>
</protein>
<dbReference type="EC" id="6.5.1.2" evidence="1"/>
<dbReference type="EMBL" id="CP000804">
    <property type="protein sequence ID" value="ABU56993.1"/>
    <property type="molecule type" value="Genomic_DNA"/>
</dbReference>
<dbReference type="RefSeq" id="WP_012119423.1">
    <property type="nucleotide sequence ID" value="NC_009767.1"/>
</dbReference>
<dbReference type="SMR" id="A7NHP6"/>
<dbReference type="STRING" id="383372.Rcas_0877"/>
<dbReference type="KEGG" id="rca:Rcas_0877"/>
<dbReference type="eggNOG" id="COG0272">
    <property type="taxonomic scope" value="Bacteria"/>
</dbReference>
<dbReference type="HOGENOM" id="CLU_007764_2_1_0"/>
<dbReference type="OrthoDB" id="9759736at2"/>
<dbReference type="Proteomes" id="UP000000263">
    <property type="component" value="Chromosome"/>
</dbReference>
<dbReference type="GO" id="GO:0003677">
    <property type="term" value="F:DNA binding"/>
    <property type="evidence" value="ECO:0007669"/>
    <property type="project" value="InterPro"/>
</dbReference>
<dbReference type="GO" id="GO:0003911">
    <property type="term" value="F:DNA ligase (NAD+) activity"/>
    <property type="evidence" value="ECO:0007669"/>
    <property type="project" value="UniProtKB-UniRule"/>
</dbReference>
<dbReference type="GO" id="GO:0046872">
    <property type="term" value="F:metal ion binding"/>
    <property type="evidence" value="ECO:0007669"/>
    <property type="project" value="UniProtKB-KW"/>
</dbReference>
<dbReference type="GO" id="GO:0006281">
    <property type="term" value="P:DNA repair"/>
    <property type="evidence" value="ECO:0007669"/>
    <property type="project" value="UniProtKB-KW"/>
</dbReference>
<dbReference type="GO" id="GO:0006260">
    <property type="term" value="P:DNA replication"/>
    <property type="evidence" value="ECO:0007669"/>
    <property type="project" value="UniProtKB-KW"/>
</dbReference>
<dbReference type="CDD" id="cd00114">
    <property type="entry name" value="LIGANc"/>
    <property type="match status" value="1"/>
</dbReference>
<dbReference type="FunFam" id="1.10.150.20:FF:000006">
    <property type="entry name" value="DNA ligase"/>
    <property type="match status" value="1"/>
</dbReference>
<dbReference type="FunFam" id="1.10.150.20:FF:000007">
    <property type="entry name" value="DNA ligase"/>
    <property type="match status" value="1"/>
</dbReference>
<dbReference type="FunFam" id="1.10.287.610:FF:000002">
    <property type="entry name" value="DNA ligase"/>
    <property type="match status" value="1"/>
</dbReference>
<dbReference type="FunFam" id="2.40.50.140:FF:000012">
    <property type="entry name" value="DNA ligase"/>
    <property type="match status" value="1"/>
</dbReference>
<dbReference type="FunFam" id="3.30.470.30:FF:000001">
    <property type="entry name" value="DNA ligase"/>
    <property type="match status" value="1"/>
</dbReference>
<dbReference type="Gene3D" id="6.20.10.30">
    <property type="match status" value="1"/>
</dbReference>
<dbReference type="Gene3D" id="1.10.150.20">
    <property type="entry name" value="5' to 3' exonuclease, C-terminal subdomain"/>
    <property type="match status" value="2"/>
</dbReference>
<dbReference type="Gene3D" id="3.40.50.10190">
    <property type="entry name" value="BRCT domain"/>
    <property type="match status" value="1"/>
</dbReference>
<dbReference type="Gene3D" id="3.30.470.30">
    <property type="entry name" value="DNA ligase/mRNA capping enzyme"/>
    <property type="match status" value="1"/>
</dbReference>
<dbReference type="Gene3D" id="1.10.287.610">
    <property type="entry name" value="Helix hairpin bin"/>
    <property type="match status" value="1"/>
</dbReference>
<dbReference type="Gene3D" id="2.40.50.140">
    <property type="entry name" value="Nucleic acid-binding proteins"/>
    <property type="match status" value="1"/>
</dbReference>
<dbReference type="HAMAP" id="MF_01588">
    <property type="entry name" value="DNA_ligase_A"/>
    <property type="match status" value="1"/>
</dbReference>
<dbReference type="InterPro" id="IPR001357">
    <property type="entry name" value="BRCT_dom"/>
</dbReference>
<dbReference type="InterPro" id="IPR036420">
    <property type="entry name" value="BRCT_dom_sf"/>
</dbReference>
<dbReference type="InterPro" id="IPR041663">
    <property type="entry name" value="DisA/LigA_HHH"/>
</dbReference>
<dbReference type="InterPro" id="IPR001679">
    <property type="entry name" value="DNA_ligase"/>
</dbReference>
<dbReference type="InterPro" id="IPR018239">
    <property type="entry name" value="DNA_ligase_AS"/>
</dbReference>
<dbReference type="InterPro" id="IPR013839">
    <property type="entry name" value="DNAligase_adenylation"/>
</dbReference>
<dbReference type="InterPro" id="IPR013840">
    <property type="entry name" value="DNAligase_N"/>
</dbReference>
<dbReference type="InterPro" id="IPR003583">
    <property type="entry name" value="Hlx-hairpin-Hlx_DNA-bd_motif"/>
</dbReference>
<dbReference type="InterPro" id="IPR012340">
    <property type="entry name" value="NA-bd_OB-fold"/>
</dbReference>
<dbReference type="InterPro" id="IPR004150">
    <property type="entry name" value="NAD_DNA_ligase_OB"/>
</dbReference>
<dbReference type="InterPro" id="IPR010994">
    <property type="entry name" value="RuvA_2-like"/>
</dbReference>
<dbReference type="InterPro" id="IPR004149">
    <property type="entry name" value="Znf_DNAligase_C4"/>
</dbReference>
<dbReference type="NCBIfam" id="TIGR00575">
    <property type="entry name" value="dnlj"/>
    <property type="match status" value="1"/>
</dbReference>
<dbReference type="NCBIfam" id="NF005932">
    <property type="entry name" value="PRK07956.1"/>
    <property type="match status" value="1"/>
</dbReference>
<dbReference type="PANTHER" id="PTHR23389">
    <property type="entry name" value="CHROMOSOME TRANSMISSION FIDELITY FACTOR 18"/>
    <property type="match status" value="1"/>
</dbReference>
<dbReference type="PANTHER" id="PTHR23389:SF6">
    <property type="entry name" value="REPLICATION FACTOR C SUBUNIT 1"/>
    <property type="match status" value="1"/>
</dbReference>
<dbReference type="Pfam" id="PF00533">
    <property type="entry name" value="BRCT"/>
    <property type="match status" value="1"/>
</dbReference>
<dbReference type="Pfam" id="PF01653">
    <property type="entry name" value="DNA_ligase_aden"/>
    <property type="match status" value="1"/>
</dbReference>
<dbReference type="Pfam" id="PF03120">
    <property type="entry name" value="DNA_ligase_OB"/>
    <property type="match status" value="1"/>
</dbReference>
<dbReference type="Pfam" id="PF03119">
    <property type="entry name" value="DNA_ligase_ZBD"/>
    <property type="match status" value="1"/>
</dbReference>
<dbReference type="Pfam" id="PF12826">
    <property type="entry name" value="HHH_2"/>
    <property type="match status" value="1"/>
</dbReference>
<dbReference type="Pfam" id="PF14520">
    <property type="entry name" value="HHH_5"/>
    <property type="match status" value="1"/>
</dbReference>
<dbReference type="Pfam" id="PF22745">
    <property type="entry name" value="Nlig-Ia"/>
    <property type="match status" value="1"/>
</dbReference>
<dbReference type="PIRSF" id="PIRSF001604">
    <property type="entry name" value="LigA"/>
    <property type="match status" value="1"/>
</dbReference>
<dbReference type="SMART" id="SM00292">
    <property type="entry name" value="BRCT"/>
    <property type="match status" value="1"/>
</dbReference>
<dbReference type="SMART" id="SM00278">
    <property type="entry name" value="HhH1"/>
    <property type="match status" value="3"/>
</dbReference>
<dbReference type="SMART" id="SM00532">
    <property type="entry name" value="LIGANc"/>
    <property type="match status" value="1"/>
</dbReference>
<dbReference type="SUPFAM" id="SSF52113">
    <property type="entry name" value="BRCT domain"/>
    <property type="match status" value="1"/>
</dbReference>
<dbReference type="SUPFAM" id="SSF56091">
    <property type="entry name" value="DNA ligase/mRNA capping enzyme, catalytic domain"/>
    <property type="match status" value="1"/>
</dbReference>
<dbReference type="SUPFAM" id="SSF50249">
    <property type="entry name" value="Nucleic acid-binding proteins"/>
    <property type="match status" value="1"/>
</dbReference>
<dbReference type="SUPFAM" id="SSF47781">
    <property type="entry name" value="RuvA domain 2-like"/>
    <property type="match status" value="1"/>
</dbReference>
<dbReference type="PROSITE" id="PS50172">
    <property type="entry name" value="BRCT"/>
    <property type="match status" value="1"/>
</dbReference>
<dbReference type="PROSITE" id="PS01055">
    <property type="entry name" value="DNA_LIGASE_N1"/>
    <property type="match status" value="1"/>
</dbReference>
<accession>A7NHP6</accession>
<feature type="chain" id="PRO_0000340374" description="DNA ligase">
    <location>
        <begin position="1"/>
        <end position="718"/>
    </location>
</feature>
<feature type="domain" description="BRCT" evidence="1">
    <location>
        <begin position="604"/>
        <end position="694"/>
    </location>
</feature>
<feature type="active site" description="N6-AMP-lysine intermediate" evidence="1">
    <location>
        <position position="117"/>
    </location>
</feature>
<feature type="binding site" evidence="1">
    <location>
        <begin position="34"/>
        <end position="38"/>
    </location>
    <ligand>
        <name>NAD(+)</name>
        <dbReference type="ChEBI" id="CHEBI:57540"/>
    </ligand>
</feature>
<feature type="binding site" evidence="1">
    <location>
        <begin position="83"/>
        <end position="84"/>
    </location>
    <ligand>
        <name>NAD(+)</name>
        <dbReference type="ChEBI" id="CHEBI:57540"/>
    </ligand>
</feature>
<feature type="binding site" evidence="1">
    <location>
        <position position="115"/>
    </location>
    <ligand>
        <name>NAD(+)</name>
        <dbReference type="ChEBI" id="CHEBI:57540"/>
    </ligand>
</feature>
<feature type="binding site" evidence="1">
    <location>
        <position position="138"/>
    </location>
    <ligand>
        <name>NAD(+)</name>
        <dbReference type="ChEBI" id="CHEBI:57540"/>
    </ligand>
</feature>
<feature type="binding site" evidence="1">
    <location>
        <position position="186"/>
    </location>
    <ligand>
        <name>NAD(+)</name>
        <dbReference type="ChEBI" id="CHEBI:57540"/>
    </ligand>
</feature>
<feature type="binding site" evidence="1">
    <location>
        <position position="302"/>
    </location>
    <ligand>
        <name>NAD(+)</name>
        <dbReference type="ChEBI" id="CHEBI:57540"/>
    </ligand>
</feature>
<feature type="binding site" evidence="1">
    <location>
        <position position="326"/>
    </location>
    <ligand>
        <name>NAD(+)</name>
        <dbReference type="ChEBI" id="CHEBI:57540"/>
    </ligand>
</feature>
<feature type="binding site" evidence="1">
    <location>
        <position position="420"/>
    </location>
    <ligand>
        <name>Zn(2+)</name>
        <dbReference type="ChEBI" id="CHEBI:29105"/>
    </ligand>
</feature>
<feature type="binding site" evidence="1">
    <location>
        <position position="423"/>
    </location>
    <ligand>
        <name>Zn(2+)</name>
        <dbReference type="ChEBI" id="CHEBI:29105"/>
    </ligand>
</feature>
<feature type="binding site" evidence="1">
    <location>
        <position position="438"/>
    </location>
    <ligand>
        <name>Zn(2+)</name>
        <dbReference type="ChEBI" id="CHEBI:29105"/>
    </ligand>
</feature>
<feature type="binding site" evidence="1">
    <location>
        <position position="444"/>
    </location>
    <ligand>
        <name>Zn(2+)</name>
        <dbReference type="ChEBI" id="CHEBI:29105"/>
    </ligand>
</feature>
<comment type="function">
    <text evidence="1">DNA ligase that catalyzes the formation of phosphodiester linkages between 5'-phosphoryl and 3'-hydroxyl groups in double-stranded DNA using NAD as a coenzyme and as the energy source for the reaction. It is essential for DNA replication and repair of damaged DNA.</text>
</comment>
<comment type="catalytic activity">
    <reaction evidence="1">
        <text>NAD(+) + (deoxyribonucleotide)n-3'-hydroxyl + 5'-phospho-(deoxyribonucleotide)m = (deoxyribonucleotide)n+m + AMP + beta-nicotinamide D-nucleotide.</text>
        <dbReference type="EC" id="6.5.1.2"/>
    </reaction>
</comment>
<comment type="cofactor">
    <cofactor evidence="1">
        <name>Mg(2+)</name>
        <dbReference type="ChEBI" id="CHEBI:18420"/>
    </cofactor>
    <cofactor evidence="1">
        <name>Mn(2+)</name>
        <dbReference type="ChEBI" id="CHEBI:29035"/>
    </cofactor>
</comment>
<comment type="similarity">
    <text evidence="1">Belongs to the NAD-dependent DNA ligase family. LigA subfamily.</text>
</comment>